<feature type="chain" id="PRO_0000216722" description="Alkanesulfonate monooxygenase">
    <location>
        <begin position="1"/>
        <end position="382"/>
    </location>
</feature>
<sequence length="382" mass="41547">MSINVFWFLPTHGDGHYLGSSEGARAVDYSYLQQIAQAADRLGFGGVLIPTGRSCEDSWLVAASLIPVTQRLKFLVALRPGIISPTLAARQAATLDRLSNGRALFNLVTGGDPEELAAEGLHLNHTERYEASAEFTHVWRKVLEGETVDFAGKHIQVKGAKLLFPPVQHPRPPLYFGGSSAAAQDLAAEQVELYLTWGEPPEQVKEKIEEVRAKAAAKGRTVRFGIRLHVIVRETTEEAWRAANRLIANLDDKTIADAQQAFAGFDSVGQQRMAALHGGKKDNLEISPNLWAGVGLVRGGAGTALVGDGPTVAQRIQEYADLGIDTFVFSGYPHLEEAYRVSELLFPHLDLATTELPTQRPATQPQGEVVANIYVPQKVSQS</sequence>
<gene>
    <name evidence="1" type="primary">ssuD</name>
    <name type="ordered locus">YPO3625</name>
    <name type="ordered locus">y0244</name>
    <name type="ordered locus">YP_3922</name>
</gene>
<keyword id="KW-0285">Flavoprotein</keyword>
<keyword id="KW-0288">FMN</keyword>
<keyword id="KW-0503">Monooxygenase</keyword>
<keyword id="KW-0560">Oxidoreductase</keyword>
<keyword id="KW-1185">Reference proteome</keyword>
<protein>
    <recommendedName>
        <fullName evidence="1">Alkanesulfonate monooxygenase</fullName>
        <ecNumber evidence="1">1.14.14.5</ecNumber>
    </recommendedName>
    <alternativeName>
        <fullName evidence="1">FMNH2-dependent aliphatic sulfonate monooxygenase</fullName>
    </alternativeName>
</protein>
<evidence type="ECO:0000255" key="1">
    <source>
        <dbReference type="HAMAP-Rule" id="MF_01229"/>
    </source>
</evidence>
<reference key="1">
    <citation type="journal article" date="2001" name="Nature">
        <title>Genome sequence of Yersinia pestis, the causative agent of plague.</title>
        <authorList>
            <person name="Parkhill J."/>
            <person name="Wren B.W."/>
            <person name="Thomson N.R."/>
            <person name="Titball R.W."/>
            <person name="Holden M.T.G."/>
            <person name="Prentice M.B."/>
            <person name="Sebaihia M."/>
            <person name="James K.D."/>
            <person name="Churcher C.M."/>
            <person name="Mungall K.L."/>
            <person name="Baker S."/>
            <person name="Basham D."/>
            <person name="Bentley S.D."/>
            <person name="Brooks K."/>
            <person name="Cerdeno-Tarraga A.-M."/>
            <person name="Chillingworth T."/>
            <person name="Cronin A."/>
            <person name="Davies R.M."/>
            <person name="Davis P."/>
            <person name="Dougan G."/>
            <person name="Feltwell T."/>
            <person name="Hamlin N."/>
            <person name="Holroyd S."/>
            <person name="Jagels K."/>
            <person name="Karlyshev A.V."/>
            <person name="Leather S."/>
            <person name="Moule S."/>
            <person name="Oyston P.C.F."/>
            <person name="Quail M.A."/>
            <person name="Rutherford K.M."/>
            <person name="Simmonds M."/>
            <person name="Skelton J."/>
            <person name="Stevens K."/>
            <person name="Whitehead S."/>
            <person name="Barrell B.G."/>
        </authorList>
    </citation>
    <scope>NUCLEOTIDE SEQUENCE [LARGE SCALE GENOMIC DNA]</scope>
    <source>
        <strain>CO-92 / Biovar Orientalis</strain>
    </source>
</reference>
<reference key="2">
    <citation type="journal article" date="2002" name="J. Bacteriol.">
        <title>Genome sequence of Yersinia pestis KIM.</title>
        <authorList>
            <person name="Deng W."/>
            <person name="Burland V."/>
            <person name="Plunkett G. III"/>
            <person name="Boutin A."/>
            <person name="Mayhew G.F."/>
            <person name="Liss P."/>
            <person name="Perna N.T."/>
            <person name="Rose D.J."/>
            <person name="Mau B."/>
            <person name="Zhou S."/>
            <person name="Schwartz D.C."/>
            <person name="Fetherston J.D."/>
            <person name="Lindler L.E."/>
            <person name="Brubaker R.R."/>
            <person name="Plano G.V."/>
            <person name="Straley S.C."/>
            <person name="McDonough K.A."/>
            <person name="Nilles M.L."/>
            <person name="Matson J.S."/>
            <person name="Blattner F.R."/>
            <person name="Perry R.D."/>
        </authorList>
    </citation>
    <scope>NUCLEOTIDE SEQUENCE [LARGE SCALE GENOMIC DNA]</scope>
    <source>
        <strain>KIM10+ / Biovar Mediaevalis</strain>
    </source>
</reference>
<reference key="3">
    <citation type="journal article" date="2004" name="DNA Res.">
        <title>Complete genome sequence of Yersinia pestis strain 91001, an isolate avirulent to humans.</title>
        <authorList>
            <person name="Song Y."/>
            <person name="Tong Z."/>
            <person name="Wang J."/>
            <person name="Wang L."/>
            <person name="Guo Z."/>
            <person name="Han Y."/>
            <person name="Zhang J."/>
            <person name="Pei D."/>
            <person name="Zhou D."/>
            <person name="Qin H."/>
            <person name="Pang X."/>
            <person name="Han Y."/>
            <person name="Zhai J."/>
            <person name="Li M."/>
            <person name="Cui B."/>
            <person name="Qi Z."/>
            <person name="Jin L."/>
            <person name="Dai R."/>
            <person name="Chen F."/>
            <person name="Li S."/>
            <person name="Ye C."/>
            <person name="Du Z."/>
            <person name="Lin W."/>
            <person name="Wang J."/>
            <person name="Yu J."/>
            <person name="Yang H."/>
            <person name="Wang J."/>
            <person name="Huang P."/>
            <person name="Yang R."/>
        </authorList>
    </citation>
    <scope>NUCLEOTIDE SEQUENCE [LARGE SCALE GENOMIC DNA]</scope>
    <source>
        <strain>91001 / Biovar Mediaevalis</strain>
    </source>
</reference>
<dbReference type="EC" id="1.14.14.5" evidence="1"/>
<dbReference type="EMBL" id="AL590842">
    <property type="protein sequence ID" value="CAL22213.1"/>
    <property type="molecule type" value="Genomic_DNA"/>
</dbReference>
<dbReference type="EMBL" id="AE009952">
    <property type="protein sequence ID" value="AAM83838.1"/>
    <property type="molecule type" value="Genomic_DNA"/>
</dbReference>
<dbReference type="EMBL" id="AE017042">
    <property type="protein sequence ID" value="AAS64067.1"/>
    <property type="molecule type" value="Genomic_DNA"/>
</dbReference>
<dbReference type="PIR" id="AB0441">
    <property type="entry name" value="AB0441"/>
</dbReference>
<dbReference type="RefSeq" id="WP_002210034.1">
    <property type="nucleotide sequence ID" value="NZ_WUCM01000052.1"/>
</dbReference>
<dbReference type="RefSeq" id="YP_002348510.1">
    <property type="nucleotide sequence ID" value="NC_003143.1"/>
</dbReference>
<dbReference type="SMR" id="Q8ZB04"/>
<dbReference type="STRING" id="214092.YPO3625"/>
<dbReference type="PaxDb" id="214092-YPO3625"/>
<dbReference type="DNASU" id="1145191"/>
<dbReference type="EnsemblBacteria" id="AAS64067">
    <property type="protein sequence ID" value="AAS64067"/>
    <property type="gene ID" value="YP_3922"/>
</dbReference>
<dbReference type="GeneID" id="57975051"/>
<dbReference type="KEGG" id="ype:YPO3625"/>
<dbReference type="KEGG" id="ypk:y0244"/>
<dbReference type="KEGG" id="ypm:YP_3922"/>
<dbReference type="PATRIC" id="fig|214092.21.peg.4126"/>
<dbReference type="eggNOG" id="COG2141">
    <property type="taxonomic scope" value="Bacteria"/>
</dbReference>
<dbReference type="HOGENOM" id="CLU_027853_1_0_6"/>
<dbReference type="OMA" id="SCEDPWL"/>
<dbReference type="OrthoDB" id="9814695at2"/>
<dbReference type="Proteomes" id="UP000000815">
    <property type="component" value="Chromosome"/>
</dbReference>
<dbReference type="Proteomes" id="UP000001019">
    <property type="component" value="Chromosome"/>
</dbReference>
<dbReference type="Proteomes" id="UP000002490">
    <property type="component" value="Chromosome"/>
</dbReference>
<dbReference type="GO" id="GO:0008726">
    <property type="term" value="F:alkanesulfonate monooxygenase activity"/>
    <property type="evidence" value="ECO:0000318"/>
    <property type="project" value="GO_Central"/>
</dbReference>
<dbReference type="GO" id="GO:0046306">
    <property type="term" value="P:alkanesulfonate catabolic process"/>
    <property type="evidence" value="ECO:0000318"/>
    <property type="project" value="GO_Central"/>
</dbReference>
<dbReference type="CDD" id="cd01094">
    <property type="entry name" value="Alkanesulfonate_monoxygenase"/>
    <property type="match status" value="1"/>
</dbReference>
<dbReference type="FunFam" id="3.20.20.30:FF:000001">
    <property type="entry name" value="Alkanesulfonate monooxygenase"/>
    <property type="match status" value="1"/>
</dbReference>
<dbReference type="Gene3D" id="3.20.20.30">
    <property type="entry name" value="Luciferase-like domain"/>
    <property type="match status" value="1"/>
</dbReference>
<dbReference type="HAMAP" id="MF_01229">
    <property type="entry name" value="Alkanesulf_monooxygen"/>
    <property type="match status" value="1"/>
</dbReference>
<dbReference type="InterPro" id="IPR019911">
    <property type="entry name" value="Alkanesulphonate_mOase_FMN-dep"/>
</dbReference>
<dbReference type="InterPro" id="IPR011251">
    <property type="entry name" value="Luciferase-like_dom"/>
</dbReference>
<dbReference type="InterPro" id="IPR036661">
    <property type="entry name" value="Luciferase-like_sf"/>
</dbReference>
<dbReference type="InterPro" id="IPR050172">
    <property type="entry name" value="SsuD_RutA_monooxygenase"/>
</dbReference>
<dbReference type="NCBIfam" id="TIGR03565">
    <property type="entry name" value="alk_sulf_monoox"/>
    <property type="match status" value="1"/>
</dbReference>
<dbReference type="NCBIfam" id="NF001939">
    <property type="entry name" value="PRK00719.1"/>
    <property type="match status" value="1"/>
</dbReference>
<dbReference type="PANTHER" id="PTHR42847">
    <property type="entry name" value="ALKANESULFONATE MONOOXYGENASE"/>
    <property type="match status" value="1"/>
</dbReference>
<dbReference type="PANTHER" id="PTHR42847:SF4">
    <property type="entry name" value="ALKANESULFONATE MONOOXYGENASE-RELATED"/>
    <property type="match status" value="1"/>
</dbReference>
<dbReference type="Pfam" id="PF00296">
    <property type="entry name" value="Bac_luciferase"/>
    <property type="match status" value="1"/>
</dbReference>
<dbReference type="SUPFAM" id="SSF51679">
    <property type="entry name" value="Bacterial luciferase-like"/>
    <property type="match status" value="1"/>
</dbReference>
<organism>
    <name type="scientific">Yersinia pestis</name>
    <dbReference type="NCBI Taxonomy" id="632"/>
    <lineage>
        <taxon>Bacteria</taxon>
        <taxon>Pseudomonadati</taxon>
        <taxon>Pseudomonadota</taxon>
        <taxon>Gammaproteobacteria</taxon>
        <taxon>Enterobacterales</taxon>
        <taxon>Yersiniaceae</taxon>
        <taxon>Yersinia</taxon>
    </lineage>
</organism>
<comment type="function">
    <text evidence="1">Catalyzes the desulfonation of aliphatic sulfonates.</text>
</comment>
<comment type="catalytic activity">
    <reaction evidence="1">
        <text>an alkanesulfonate + FMNH2 + O2 = an aldehyde + FMN + sulfite + H2O + 2 H(+)</text>
        <dbReference type="Rhea" id="RHEA:23064"/>
        <dbReference type="ChEBI" id="CHEBI:15377"/>
        <dbReference type="ChEBI" id="CHEBI:15378"/>
        <dbReference type="ChEBI" id="CHEBI:15379"/>
        <dbReference type="ChEBI" id="CHEBI:17359"/>
        <dbReference type="ChEBI" id="CHEBI:17478"/>
        <dbReference type="ChEBI" id="CHEBI:57618"/>
        <dbReference type="ChEBI" id="CHEBI:58210"/>
        <dbReference type="ChEBI" id="CHEBI:134249"/>
        <dbReference type="EC" id="1.14.14.5"/>
    </reaction>
</comment>
<comment type="subunit">
    <text evidence="1">Homotetramer.</text>
</comment>
<comment type="miscellaneous">
    <text evidence="1">FMNH(2) which is absolutely required for this enzymatic reaction, is provided by SsuE.</text>
</comment>
<comment type="similarity">
    <text evidence="1">Belongs to the SsuD family.</text>
</comment>
<proteinExistence type="inferred from homology"/>
<accession>Q8ZB04</accession>
<accession>Q0WB28</accession>
<name>SSUD_YERPE</name>